<accession>B5VMR4</accession>
<gene>
    <name type="primary">IRC19</name>
    <name type="synonym">RRG4</name>
    <name type="ORF">AWRI1631_120240</name>
</gene>
<feature type="chain" id="PRO_0000399065" description="Increased recombination centers protein 19">
    <location>
        <begin position="1"/>
        <end position="230"/>
    </location>
</feature>
<evidence type="ECO:0000250" key="1"/>
<evidence type="ECO:0000305" key="2"/>
<dbReference type="EMBL" id="ABSV01001543">
    <property type="protein sequence ID" value="EDZ70784.1"/>
    <property type="molecule type" value="Genomic_DNA"/>
</dbReference>
<dbReference type="SMR" id="B5VMR4"/>
<dbReference type="Proteomes" id="UP000008988">
    <property type="component" value="Unassembled WGS sequence"/>
</dbReference>
<dbReference type="GO" id="GO:0030437">
    <property type="term" value="P:ascospore formation"/>
    <property type="evidence" value="ECO:0007669"/>
    <property type="project" value="InterPro"/>
</dbReference>
<dbReference type="InterPro" id="IPR016613">
    <property type="entry name" value="Irc19"/>
</dbReference>
<dbReference type="PIRSF" id="PIRSF013329">
    <property type="entry name" value="UCP013329"/>
    <property type="match status" value="1"/>
</dbReference>
<sequence>MRKPSITITTAKAIITPDYTLIKSHSKYQLPSRFQKLDADSPERSTVVKLFYRRFMRLKPFISNVKMVKDTYRDYVRYKFMKENYELKRYLVFNPDGLRSKIKVELLSNTKCCEKILPVTEMQRTLEFVLKSCSYLPETKAQKWDIARDNTYCRQILKNLLTMQYEKYRSILHRGIGHDELDVKFSHLKTTSSPLTKLNKTEKKKIPLFKVFSDFDTTLIYLNETLGTRL</sequence>
<protein>
    <recommendedName>
        <fullName>Increased recombination centers protein 19</fullName>
    </recommendedName>
</protein>
<name>IRC19_YEAS6</name>
<organism>
    <name type="scientific">Saccharomyces cerevisiae (strain AWRI1631)</name>
    <name type="common">Baker's yeast</name>
    <dbReference type="NCBI Taxonomy" id="545124"/>
    <lineage>
        <taxon>Eukaryota</taxon>
        <taxon>Fungi</taxon>
        <taxon>Dikarya</taxon>
        <taxon>Ascomycota</taxon>
        <taxon>Saccharomycotina</taxon>
        <taxon>Saccharomycetes</taxon>
        <taxon>Saccharomycetales</taxon>
        <taxon>Saccharomycetaceae</taxon>
        <taxon>Saccharomyces</taxon>
    </lineage>
</organism>
<reference key="1">
    <citation type="journal article" date="2008" name="FEMS Yeast Res.">
        <title>Comparative genome analysis of a Saccharomyces cerevisiae wine strain.</title>
        <authorList>
            <person name="Borneman A.R."/>
            <person name="Forgan A.H."/>
            <person name="Pretorius I.S."/>
            <person name="Chambers P.J."/>
        </authorList>
    </citation>
    <scope>NUCLEOTIDE SEQUENCE [LARGE SCALE GENOMIC DNA]</scope>
    <source>
        <strain>AWRI1631</strain>
    </source>
</reference>
<comment type="function">
    <text evidence="1">Involved in sporulation and maintenance of the mitochondrial DNA. Is probably involved in a pathway contributing to genomic integrity (By similarity).</text>
</comment>
<comment type="similarity">
    <text evidence="2">Belongs to the IRC19 family.</text>
</comment>
<proteinExistence type="inferred from homology"/>
<keyword id="KW-0749">Sporulation</keyword>